<dbReference type="EMBL" id="BX284601">
    <property type="protein sequence ID" value="CAB03516.1"/>
    <property type="molecule type" value="Genomic_DNA"/>
</dbReference>
<dbReference type="PIR" id="T27809">
    <property type="entry name" value="T27809"/>
</dbReference>
<dbReference type="RefSeq" id="NP_492248.1">
    <property type="nucleotide sequence ID" value="NM_059847.6"/>
</dbReference>
<dbReference type="SMR" id="Q94402"/>
<dbReference type="BioGRID" id="55817">
    <property type="interactions" value="8"/>
</dbReference>
<dbReference type="FunCoup" id="Q94402">
    <property type="interactions" value="2135"/>
</dbReference>
<dbReference type="STRING" id="6239.ZK265.6.1"/>
<dbReference type="PaxDb" id="6239-ZK265.6"/>
<dbReference type="PeptideAtlas" id="Q94402"/>
<dbReference type="EnsemblMetazoa" id="ZK265.6.1">
    <property type="protein sequence ID" value="ZK265.6.1"/>
    <property type="gene ID" value="WBGene00013958"/>
</dbReference>
<dbReference type="GeneID" id="191277"/>
<dbReference type="KEGG" id="cel:CELE_ZK265.6"/>
<dbReference type="UCSC" id="ZK265.6">
    <property type="organism name" value="c. elegans"/>
</dbReference>
<dbReference type="AGR" id="WB:WBGene00013958"/>
<dbReference type="CTD" id="191277"/>
<dbReference type="WormBase" id="ZK265.6">
    <property type="protein sequence ID" value="CE15299"/>
    <property type="gene ID" value="WBGene00013958"/>
    <property type="gene designation" value="nol-16"/>
</dbReference>
<dbReference type="eggNOG" id="KOG4706">
    <property type="taxonomic scope" value="Eukaryota"/>
</dbReference>
<dbReference type="GeneTree" id="ENSGT00390000003426"/>
<dbReference type="HOGENOM" id="CLU_115103_1_0_1"/>
<dbReference type="InParanoid" id="Q94402"/>
<dbReference type="OMA" id="RRNHGQW"/>
<dbReference type="OrthoDB" id="285729at2759"/>
<dbReference type="PhylomeDB" id="Q94402"/>
<dbReference type="PRO" id="PR:Q94402"/>
<dbReference type="Proteomes" id="UP000001940">
    <property type="component" value="Chromosome I"/>
</dbReference>
<dbReference type="Bgee" id="WBGene00013958">
    <property type="expression patterns" value="Expressed in germ line (C elegans) and 4 other cell types or tissues"/>
</dbReference>
<dbReference type="GO" id="GO:0005730">
    <property type="term" value="C:nucleolus"/>
    <property type="evidence" value="ECO:0007005"/>
    <property type="project" value="WormBase"/>
</dbReference>
<dbReference type="GO" id="GO:0005634">
    <property type="term" value="C:nucleus"/>
    <property type="evidence" value="ECO:0007005"/>
    <property type="project" value="WormBase"/>
</dbReference>
<dbReference type="GO" id="GO:0042273">
    <property type="term" value="P:ribosomal large subunit biogenesis"/>
    <property type="evidence" value="ECO:0000318"/>
    <property type="project" value="GO_Central"/>
</dbReference>
<dbReference type="InterPro" id="IPR019002">
    <property type="entry name" value="Ribosome_biogenesis_Nop16"/>
</dbReference>
<dbReference type="PANTHER" id="PTHR13243">
    <property type="entry name" value="HSPC111 PROTEIN-RELATED"/>
    <property type="match status" value="1"/>
</dbReference>
<dbReference type="PANTHER" id="PTHR13243:SF1">
    <property type="entry name" value="NUCLEOLAR PROTEIN 16"/>
    <property type="match status" value="1"/>
</dbReference>
<dbReference type="Pfam" id="PF09420">
    <property type="entry name" value="Nop16"/>
    <property type="match status" value="2"/>
</dbReference>
<protein>
    <recommendedName>
        <fullName evidence="4">Nucleolar protein 16</fullName>
    </recommendedName>
</protein>
<name>NOP16_CAEEL</name>
<keyword id="KW-0539">Nucleus</keyword>
<keyword id="KW-1185">Reference proteome</keyword>
<feature type="chain" id="PRO_0000065509" description="Nucleolar protein 16">
    <location>
        <begin position="1"/>
        <end position="189"/>
    </location>
</feature>
<feature type="region of interest" description="Disordered" evidence="2">
    <location>
        <begin position="1"/>
        <end position="34"/>
    </location>
</feature>
<feature type="compositionally biased region" description="Basic residues" evidence="2">
    <location>
        <begin position="1"/>
        <end position="33"/>
    </location>
</feature>
<accession>Q94402</accession>
<sequence length="189" mass="22259">MARDVKKRGKPAYTNRRNRQKYLKKKDNKKKLSKSAVPIIKYTWDETKTPRENVRDMGIAFNPNDAVPIAEHRKEIIDAEPIDGVSIVVPKPEKKVTGRKKNEKQAAHIISNLEQQVKEEEEARAGQDRKFRLFHRETELCVYMLARHGEDFQAMTRDPKNLWQYTPKQWAKKIRTHKESEMCKFLETA</sequence>
<proteinExistence type="inferred from homology"/>
<reference key="1">
    <citation type="journal article" date="1998" name="Science">
        <title>Genome sequence of the nematode C. elegans: a platform for investigating biology.</title>
        <authorList>
            <consortium name="The C. elegans sequencing consortium"/>
        </authorList>
    </citation>
    <scope>NUCLEOTIDE SEQUENCE [LARGE SCALE GENOMIC DNA]</scope>
    <source>
        <strain>Bristol N2</strain>
    </source>
</reference>
<gene>
    <name evidence="4" type="primary">nol-16</name>
    <name evidence="4" type="ORF">ZK265.6</name>
</gene>
<evidence type="ECO:0000250" key="1">
    <source>
        <dbReference type="UniProtKB" id="Q9Y3C1"/>
    </source>
</evidence>
<evidence type="ECO:0000256" key="2">
    <source>
        <dbReference type="SAM" id="MobiDB-lite"/>
    </source>
</evidence>
<evidence type="ECO:0000305" key="3"/>
<evidence type="ECO:0000312" key="4">
    <source>
        <dbReference type="WormBase" id="ZK265.6"/>
    </source>
</evidence>
<comment type="subcellular location">
    <subcellularLocation>
        <location evidence="1">Nucleus</location>
        <location evidence="1">Nucleolus</location>
    </subcellularLocation>
</comment>
<comment type="similarity">
    <text evidence="3">Belongs to the NOP16 family.</text>
</comment>
<organism>
    <name type="scientific">Caenorhabditis elegans</name>
    <dbReference type="NCBI Taxonomy" id="6239"/>
    <lineage>
        <taxon>Eukaryota</taxon>
        <taxon>Metazoa</taxon>
        <taxon>Ecdysozoa</taxon>
        <taxon>Nematoda</taxon>
        <taxon>Chromadorea</taxon>
        <taxon>Rhabditida</taxon>
        <taxon>Rhabditina</taxon>
        <taxon>Rhabditomorpha</taxon>
        <taxon>Rhabditoidea</taxon>
        <taxon>Rhabditidae</taxon>
        <taxon>Peloderinae</taxon>
        <taxon>Caenorhabditis</taxon>
    </lineage>
</organism>